<gene>
    <name evidence="10 13" type="primary">Dhx15</name>
    <name type="synonym">Ddx15</name>
    <name evidence="11" type="synonym">Deah9</name>
</gene>
<evidence type="ECO:0000250" key="1">
    <source>
        <dbReference type="UniProtKB" id="O43143"/>
    </source>
</evidence>
<evidence type="ECO:0000255" key="2">
    <source>
        <dbReference type="PROSITE-ProRule" id="PRU00541"/>
    </source>
</evidence>
<evidence type="ECO:0000255" key="3">
    <source>
        <dbReference type="PROSITE-ProRule" id="PRU00542"/>
    </source>
</evidence>
<evidence type="ECO:0000256" key="4">
    <source>
        <dbReference type="SAM" id="MobiDB-lite"/>
    </source>
</evidence>
<evidence type="ECO:0000269" key="5">
    <source>
    </source>
</evidence>
<evidence type="ECO:0000269" key="6">
    <source>
    </source>
</evidence>
<evidence type="ECO:0000269" key="7">
    <source>
    </source>
</evidence>
<evidence type="ECO:0000269" key="8">
    <source>
    </source>
</evidence>
<evidence type="ECO:0000269" key="9">
    <source>
    </source>
</evidence>
<evidence type="ECO:0000303" key="10">
    <source>
    </source>
</evidence>
<evidence type="ECO:0000303" key="11">
    <source>
    </source>
</evidence>
<evidence type="ECO:0000305" key="12"/>
<evidence type="ECO:0000312" key="13">
    <source>
        <dbReference type="MGI" id="MGI:1099786"/>
    </source>
</evidence>
<comment type="function">
    <text evidence="1 5 6 7 8">RNA helicase involved in mRNA processing and antiviral innate immunity (PubMed:26494172, PubMed:34161762). Pre-mRNA processing factor involved in disassembly of spliceosomes after the release of mature mRNA (By similarity). In cooperation with TFIP11 seem to be involved in the transition of the U2, U5 and U6 snRNP-containing IL complex to the snRNP-free IS complex leading to efficient debranching and turnover of excised introns (By similarity). Plays a key role in antiviral innate immunity by promoting both MAVS-dependent signaling and NLRP6 inflammasome (PubMed:26494172). Acts as an RNA virus sensor: recognizes and binds viral double stranded RNA (dsRNA) and activates the MAVS-dependent signaling to produce interferon-beta and interferon lambda-3 (IFNL3) (By similarity). Involved in intestinal antiviral innate immunity together with NLRP6: recognizes and binds viral dsRNA and promotes activation of the NLRP6 inflammasome in intestinal epithelial cells to restrict infection by enteric viruses (PubMed:26494172, PubMed:34161762, PubMed:34678144). The NLRP6 inflammasome acts by promoting maturation and secretion of IL18 in the extracellular milieu (PubMed:34161762). Also involved in antibacterial innate immunity by promoting Wnt-induced antimicrobial protein expression in Paneth cells (PubMed:33483420).</text>
</comment>
<comment type="catalytic activity">
    <reaction evidence="1">
        <text>ATP + H2O = ADP + phosphate + H(+)</text>
        <dbReference type="Rhea" id="RHEA:13065"/>
        <dbReference type="ChEBI" id="CHEBI:15377"/>
        <dbReference type="ChEBI" id="CHEBI:15378"/>
        <dbReference type="ChEBI" id="CHEBI:30616"/>
        <dbReference type="ChEBI" id="CHEBI:43474"/>
        <dbReference type="ChEBI" id="CHEBI:456216"/>
        <dbReference type="EC" id="3.6.4.13"/>
    </reaction>
</comment>
<comment type="activity regulation">
    <text evidence="1">ATPase activity is enhanced upon binding to G-patch domain-containing proteins. G-patch domain-containing proteins act like a brace that tethers mobile sections of DHX15 together, stabilizing a functional conformation with high RNA affinity, thereby promoting the ATPase activity.</text>
</comment>
<comment type="subunit">
    <text evidence="1 5">Component of the U11/U12 snRNPs that are part of the U12-type spliceosome (By similarity). Identified in the Intron Large spliceosome complex (IL, also named intron lariat spliceosome), a post-mRNA release spliceosomal complex containing the excised intron, U2, U5 and U6 snRNPs, and splicing factors; the association may be transient (By similarity). The IL complex exists in two distinct conformations, one with the DHX15 (ILS2) and one without (ILS1) (By similarity). Interacts with TFIP11 (via G-patch domain); indicative for a recruitment to the IL complex (By similarity). Interacts with SSB/La (By similarity). Interacts with GPATCH2 (via G-patch domain); promoting the RNA helicase activity (By similarity). Interacts with NKRF (via G-patch domain); promoting the RNA helicase activity (By similarity). Interacts with NLRP6 (PubMed:26494172).</text>
</comment>
<comment type="interaction">
    <interactant intactId="EBI-8322087">
        <id>O35286</id>
    </interactant>
    <interactant intactId="EBI-16182145">
        <id>Q91WS2</id>
        <label>Nlrp6</label>
    </interactant>
    <organismsDiffer>false</organismsDiffer>
    <experiments>2</experiments>
</comment>
<comment type="interaction">
    <interactant intactId="EBI-8322087">
        <id>O35286</id>
    </interactant>
    <interactant intactId="EBI-8338752">
        <id>Q9ERA6</id>
        <label>Tfip11</label>
    </interactant>
    <organismsDiffer>false</organismsDiffer>
    <experiments>3</experiments>
</comment>
<comment type="subcellular location">
    <subcellularLocation>
        <location evidence="9">Nucleus</location>
    </subcellularLocation>
    <subcellularLocation>
        <location evidence="9">Nucleus</location>
        <location evidence="9">Nucleolus</location>
    </subcellularLocation>
</comment>
<comment type="tissue specificity">
    <text evidence="9">Ubiquitous.</text>
</comment>
<comment type="disruption phenotype">
    <text evidence="6 7">Conditional deletion in intestinal epithelial cells leads to impaired antiviral innate immunity, leading to lethality following infection by an RNA virus (PubMed:34161762). Conditional deletion in intestinal epithelial cells leads to impaired antibacterial immunity, characterized by susceptibility to infection by enteric bacteria C.rodentium (PubMed:33483420). Conditional deletion in Paneth cells leads to reduced expression of alpha-defensins and severe DSS (dextran sodium sulfate)-induced colitis (PubMed:33483420).</text>
</comment>
<comment type="similarity">
    <text evidence="12">Belongs to the DEAD box helicase family. DEAH subfamily. DDX15/PRP43 sub-subfamily.</text>
</comment>
<comment type="sequence caution" evidence="12">
    <conflict type="frameshift">
        <sequence resource="EMBL" id="BC003745"/>
    </conflict>
</comment>
<sequence>MSKRHRLDLGEDYPSGKKRAGTDGKDRERDRDREDRSKDRDRERDRGDREREREKEKEKELRASTNAMLISAGLPPLKASHSAHSTHSAHSTHSTHSAHSTHTGHTGHTSLPQCINPFTNLPHTPRYYDILKKRLQLPVWEYKDRFTDILVRHQSFVLVGETGSGKTTQIPQWCVEYMRSLPGPKRGVACTQPRRVAAMSVAQRVADEMDVMLGQEVGYSIRFEDCSSAKTILKYMTDGMLLREAMNDPLLERYGVIILDEAHERTLATDILMGVLKEVVRQRSDLKVIVMSATLDAGKFQIYFDNCPLLTIPGRTHPVEIFYTPEPERDYLEAAIRTVIQIHMCEEEEGDLLLFLTGQEEIDEACKRIKREVDDLGPEVGDIKIIPLYSTLPPQQQQRIFEPPPPKKQNGAIGRKVVVSTNIAETSLTIDGVVFVIDPGFAKQKVYNPRIRVESLLVTAISKASAQQRAGRAGRTRPGKCFRLYTEKAYKTEMQDNTYPEILRSNLGSVVLQLKKLGIDDLVHFDFMDPPAPETLMRALELLNYLAALNDDGDLTELGSMMAEFPLDPQLAKMVIASCDYNCSNEVLSITAMLSVPQCFVRPTEAKKAADEAKMRFAHIDGDHLTLLNVYHAFKQNHESVQWCYDNFINYRSLMSADNVRQQLSRIMDRFNLPRRSTDFTSRDYYINIRKALVTGYFMQVAHLERTGHYLTVKDNQVVQLHPSTVLDHKPEWVLYNEFVLTTKNYIRTCTDIKPEWLVKIAPQYYDMSNFPQCEAKRQLDRIIAKLQSKEYSQY</sequence>
<organism>
    <name type="scientific">Mus musculus</name>
    <name type="common">Mouse</name>
    <dbReference type="NCBI Taxonomy" id="10090"/>
    <lineage>
        <taxon>Eukaryota</taxon>
        <taxon>Metazoa</taxon>
        <taxon>Chordata</taxon>
        <taxon>Craniata</taxon>
        <taxon>Vertebrata</taxon>
        <taxon>Euteleostomi</taxon>
        <taxon>Mammalia</taxon>
        <taxon>Eutheria</taxon>
        <taxon>Euarchontoglires</taxon>
        <taxon>Glires</taxon>
        <taxon>Rodentia</taxon>
        <taxon>Myomorpha</taxon>
        <taxon>Muroidea</taxon>
        <taxon>Muridae</taxon>
        <taxon>Murinae</taxon>
        <taxon>Mus</taxon>
        <taxon>Mus</taxon>
    </lineage>
</organism>
<protein>
    <recommendedName>
        <fullName evidence="12">ATP-dependent RNA helicase DHX15</fullName>
        <ecNumber evidence="1">3.6.4.13</ecNumber>
    </recommendedName>
    <alternativeName>
        <fullName evidence="11">DEAH box protein 15</fullName>
    </alternativeName>
</protein>
<dbReference type="EC" id="3.6.4.13" evidence="1"/>
<dbReference type="EMBL" id="AF017153">
    <property type="protein sequence ID" value="AAC36129.1"/>
    <property type="molecule type" value="mRNA"/>
</dbReference>
<dbReference type="EMBL" id="BC003745">
    <property type="status" value="NOT_ANNOTATED_CDS"/>
    <property type="molecule type" value="mRNA"/>
</dbReference>
<dbReference type="CCDS" id="CCDS39085.1"/>
<dbReference type="RefSeq" id="NP_031865.2">
    <property type="nucleotide sequence ID" value="NM_007839.3"/>
</dbReference>
<dbReference type="SMR" id="O35286"/>
<dbReference type="BioGRID" id="199083">
    <property type="interactions" value="61"/>
</dbReference>
<dbReference type="CORUM" id="O35286"/>
<dbReference type="DIP" id="DIP-61875N"/>
<dbReference type="FunCoup" id="O35286">
    <property type="interactions" value="4863"/>
</dbReference>
<dbReference type="IntAct" id="O35286">
    <property type="interactions" value="6"/>
</dbReference>
<dbReference type="MINT" id="O35286"/>
<dbReference type="STRING" id="10090.ENSMUSP00000031061"/>
<dbReference type="GlyGen" id="O35286">
    <property type="glycosylation" value="1 site, 1 O-linked glycan (1 site)"/>
</dbReference>
<dbReference type="iPTMnet" id="O35286"/>
<dbReference type="MetOSite" id="O35286"/>
<dbReference type="PhosphoSitePlus" id="O35286"/>
<dbReference type="SwissPalm" id="O35286"/>
<dbReference type="jPOST" id="O35286"/>
<dbReference type="PaxDb" id="10090-ENSMUSP00000031061"/>
<dbReference type="PeptideAtlas" id="O35286"/>
<dbReference type="ProteomicsDB" id="279649"/>
<dbReference type="Pumba" id="O35286"/>
<dbReference type="Antibodypedia" id="10152">
    <property type="antibodies" value="177 antibodies from 21 providers"/>
</dbReference>
<dbReference type="DNASU" id="13204"/>
<dbReference type="Ensembl" id="ENSMUST00000031061.12">
    <property type="protein sequence ID" value="ENSMUSP00000031061.8"/>
    <property type="gene ID" value="ENSMUSG00000029169.12"/>
</dbReference>
<dbReference type="GeneID" id="13204"/>
<dbReference type="KEGG" id="mmu:13204"/>
<dbReference type="UCSC" id="uc008xkf.2">
    <property type="organism name" value="mouse"/>
</dbReference>
<dbReference type="AGR" id="MGI:1099786"/>
<dbReference type="CTD" id="1665"/>
<dbReference type="MGI" id="MGI:1099786">
    <property type="gene designation" value="Dhx15"/>
</dbReference>
<dbReference type="VEuPathDB" id="HostDB:ENSMUSG00000029169"/>
<dbReference type="eggNOG" id="KOG0925">
    <property type="taxonomic scope" value="Eukaryota"/>
</dbReference>
<dbReference type="GeneTree" id="ENSGT00940000155800"/>
<dbReference type="InParanoid" id="O35286"/>
<dbReference type="OMA" id="MKVYPLY"/>
<dbReference type="OrthoDB" id="10253254at2759"/>
<dbReference type="PhylomeDB" id="O35286"/>
<dbReference type="TreeFam" id="TF105735"/>
<dbReference type="Reactome" id="R-MMU-72163">
    <property type="pathway name" value="mRNA Splicing - Major Pathway"/>
</dbReference>
<dbReference type="BioGRID-ORCS" id="13204">
    <property type="hits" value="26 hits in 77 CRISPR screens"/>
</dbReference>
<dbReference type="CD-CODE" id="CE726F99">
    <property type="entry name" value="Postsynaptic density"/>
</dbReference>
<dbReference type="ChiTaRS" id="Dhx15">
    <property type="organism name" value="mouse"/>
</dbReference>
<dbReference type="PRO" id="PR:O35286"/>
<dbReference type="Proteomes" id="UP000000589">
    <property type="component" value="Chromosome 5"/>
</dbReference>
<dbReference type="RNAct" id="O35286">
    <property type="molecule type" value="protein"/>
</dbReference>
<dbReference type="Bgee" id="ENSMUSG00000029169">
    <property type="expression patterns" value="Expressed in primitive streak and 244 other cell types or tissues"/>
</dbReference>
<dbReference type="ExpressionAtlas" id="O35286">
    <property type="expression patterns" value="baseline and differential"/>
</dbReference>
<dbReference type="GO" id="GO:0016607">
    <property type="term" value="C:nuclear speck"/>
    <property type="evidence" value="ECO:0007669"/>
    <property type="project" value="Ensembl"/>
</dbReference>
<dbReference type="GO" id="GO:0005730">
    <property type="term" value="C:nucleolus"/>
    <property type="evidence" value="ECO:0007669"/>
    <property type="project" value="UniProtKB-SubCell"/>
</dbReference>
<dbReference type="GO" id="GO:0005689">
    <property type="term" value="C:U12-type spliceosomal complex"/>
    <property type="evidence" value="ECO:0000250"/>
    <property type="project" value="HGNC-UCL"/>
</dbReference>
<dbReference type="GO" id="GO:0071008">
    <property type="term" value="C:U2-type post-mRNA release spliceosomal complex"/>
    <property type="evidence" value="ECO:0007669"/>
    <property type="project" value="Ensembl"/>
</dbReference>
<dbReference type="GO" id="GO:0005524">
    <property type="term" value="F:ATP binding"/>
    <property type="evidence" value="ECO:0007669"/>
    <property type="project" value="UniProtKB-KW"/>
</dbReference>
<dbReference type="GO" id="GO:0016887">
    <property type="term" value="F:ATP hydrolysis activity"/>
    <property type="evidence" value="ECO:0007669"/>
    <property type="project" value="RHEA"/>
</dbReference>
<dbReference type="GO" id="GO:0003725">
    <property type="term" value="F:double-stranded RNA binding"/>
    <property type="evidence" value="ECO:0000250"/>
    <property type="project" value="UniProtKB"/>
</dbReference>
<dbReference type="GO" id="GO:0003724">
    <property type="term" value="F:RNA helicase activity"/>
    <property type="evidence" value="ECO:0000250"/>
    <property type="project" value="UniProtKB"/>
</dbReference>
<dbReference type="GO" id="GO:0140374">
    <property type="term" value="P:antiviral innate immune response"/>
    <property type="evidence" value="ECO:0000314"/>
    <property type="project" value="UniProtKB"/>
</dbReference>
<dbReference type="GO" id="GO:0042742">
    <property type="term" value="P:defense response to bacterium"/>
    <property type="evidence" value="ECO:0000315"/>
    <property type="project" value="UniProtKB"/>
</dbReference>
<dbReference type="GO" id="GO:0051607">
    <property type="term" value="P:defense response to virus"/>
    <property type="evidence" value="ECO:0000314"/>
    <property type="project" value="UniProtKB"/>
</dbReference>
<dbReference type="GO" id="GO:0006397">
    <property type="term" value="P:mRNA processing"/>
    <property type="evidence" value="ECO:0007669"/>
    <property type="project" value="UniProtKB-KW"/>
</dbReference>
<dbReference type="GO" id="GO:0043123">
    <property type="term" value="P:positive regulation of canonical NF-kappaB signal transduction"/>
    <property type="evidence" value="ECO:0000250"/>
    <property type="project" value="UniProtKB"/>
</dbReference>
<dbReference type="GO" id="GO:0043279">
    <property type="term" value="P:response to alkaloid"/>
    <property type="evidence" value="ECO:0007669"/>
    <property type="project" value="Ensembl"/>
</dbReference>
<dbReference type="GO" id="GO:0009636">
    <property type="term" value="P:response to toxic substance"/>
    <property type="evidence" value="ECO:0007669"/>
    <property type="project" value="Ensembl"/>
</dbReference>
<dbReference type="GO" id="GO:0008380">
    <property type="term" value="P:RNA splicing"/>
    <property type="evidence" value="ECO:0007669"/>
    <property type="project" value="UniProtKB-KW"/>
</dbReference>
<dbReference type="CDD" id="cd17973">
    <property type="entry name" value="DEXHc_DHX15"/>
    <property type="match status" value="1"/>
</dbReference>
<dbReference type="CDD" id="cd18791">
    <property type="entry name" value="SF2_C_RHA"/>
    <property type="match status" value="1"/>
</dbReference>
<dbReference type="FunFam" id="3.40.50.300:FF:000007">
    <property type="entry name" value="Pre-mRNA-splicing factor ATP-dependent RNA helicase"/>
    <property type="match status" value="1"/>
</dbReference>
<dbReference type="FunFam" id="3.40.50.300:FF:000324">
    <property type="entry name" value="pre-mRNA-splicing factor ATP-dependent RNA helicase DHX15"/>
    <property type="match status" value="1"/>
</dbReference>
<dbReference type="FunFam" id="1.20.120.1080:FF:000003">
    <property type="entry name" value="Pre-mRNA-splicing factor ATP-dependent RNA helicase PRP43"/>
    <property type="match status" value="1"/>
</dbReference>
<dbReference type="Gene3D" id="1.20.120.1080">
    <property type="match status" value="1"/>
</dbReference>
<dbReference type="Gene3D" id="3.40.50.300">
    <property type="entry name" value="P-loop containing nucleotide triphosphate hydrolases"/>
    <property type="match status" value="2"/>
</dbReference>
<dbReference type="InterPro" id="IPR011709">
    <property type="entry name" value="DEAD-box_helicase_OB_fold"/>
</dbReference>
<dbReference type="InterPro" id="IPR011545">
    <property type="entry name" value="DEAD/DEAH_box_helicase_dom"/>
</dbReference>
<dbReference type="InterPro" id="IPR044756">
    <property type="entry name" value="DHX15_DEXHc"/>
</dbReference>
<dbReference type="InterPro" id="IPR002464">
    <property type="entry name" value="DNA/RNA_helicase_DEAH_CS"/>
</dbReference>
<dbReference type="InterPro" id="IPR048333">
    <property type="entry name" value="HA2_WH"/>
</dbReference>
<dbReference type="InterPro" id="IPR007502">
    <property type="entry name" value="Helicase-assoc_dom"/>
</dbReference>
<dbReference type="InterPro" id="IPR014001">
    <property type="entry name" value="Helicase_ATP-bd"/>
</dbReference>
<dbReference type="InterPro" id="IPR001650">
    <property type="entry name" value="Helicase_C-like"/>
</dbReference>
<dbReference type="InterPro" id="IPR027417">
    <property type="entry name" value="P-loop_NTPase"/>
</dbReference>
<dbReference type="PANTHER" id="PTHR18934">
    <property type="entry name" value="ATP-DEPENDENT RNA HELICASE"/>
    <property type="match status" value="1"/>
</dbReference>
<dbReference type="PANTHER" id="PTHR18934:SF95">
    <property type="entry name" value="ATP-DEPENDENT RNA HELICASE DHX15"/>
    <property type="match status" value="1"/>
</dbReference>
<dbReference type="Pfam" id="PF00270">
    <property type="entry name" value="DEAD"/>
    <property type="match status" value="1"/>
</dbReference>
<dbReference type="Pfam" id="PF21010">
    <property type="entry name" value="HA2_C"/>
    <property type="match status" value="1"/>
</dbReference>
<dbReference type="Pfam" id="PF04408">
    <property type="entry name" value="HA2_N"/>
    <property type="match status" value="1"/>
</dbReference>
<dbReference type="Pfam" id="PF00271">
    <property type="entry name" value="Helicase_C"/>
    <property type="match status" value="1"/>
</dbReference>
<dbReference type="Pfam" id="PF07717">
    <property type="entry name" value="OB_NTP_bind"/>
    <property type="match status" value="1"/>
</dbReference>
<dbReference type="SMART" id="SM00487">
    <property type="entry name" value="DEXDc"/>
    <property type="match status" value="1"/>
</dbReference>
<dbReference type="SMART" id="SM00847">
    <property type="entry name" value="HA2"/>
    <property type="match status" value="1"/>
</dbReference>
<dbReference type="SMART" id="SM00490">
    <property type="entry name" value="HELICc"/>
    <property type="match status" value="1"/>
</dbReference>
<dbReference type="SUPFAM" id="SSF52540">
    <property type="entry name" value="P-loop containing nucleoside triphosphate hydrolases"/>
    <property type="match status" value="1"/>
</dbReference>
<dbReference type="PROSITE" id="PS00690">
    <property type="entry name" value="DEAH_ATP_HELICASE"/>
    <property type="match status" value="1"/>
</dbReference>
<dbReference type="PROSITE" id="PS51192">
    <property type="entry name" value="HELICASE_ATP_BIND_1"/>
    <property type="match status" value="1"/>
</dbReference>
<dbReference type="PROSITE" id="PS51194">
    <property type="entry name" value="HELICASE_CTER"/>
    <property type="match status" value="1"/>
</dbReference>
<feature type="chain" id="PRO_0000055140" description="ATP-dependent RNA helicase DHX15">
    <location>
        <begin position="1"/>
        <end position="795"/>
    </location>
</feature>
<feature type="domain" description="Helicase ATP-binding" evidence="2">
    <location>
        <begin position="147"/>
        <end position="313"/>
    </location>
</feature>
<feature type="domain" description="Helicase C-terminal" evidence="3">
    <location>
        <begin position="338"/>
        <end position="518"/>
    </location>
</feature>
<feature type="region of interest" description="Disordered" evidence="4">
    <location>
        <begin position="1"/>
        <end position="111"/>
    </location>
</feature>
<feature type="short sequence motif" description="DEAH box">
    <location>
        <begin position="260"/>
        <end position="263"/>
    </location>
</feature>
<feature type="compositionally biased region" description="Basic and acidic residues" evidence="4">
    <location>
        <begin position="20"/>
        <end position="62"/>
    </location>
</feature>
<feature type="compositionally biased region" description="Low complexity" evidence="4">
    <location>
        <begin position="79"/>
        <end position="110"/>
    </location>
</feature>
<feature type="binding site" evidence="2">
    <location>
        <begin position="160"/>
        <end position="167"/>
    </location>
    <ligand>
        <name>ATP</name>
        <dbReference type="ChEBI" id="CHEBI:30616"/>
    </ligand>
</feature>
<feature type="modified residue" description="Phosphoserine" evidence="1">
    <location>
        <position position="15"/>
    </location>
</feature>
<feature type="modified residue" description="N6-acetyllysine" evidence="1">
    <location>
        <position position="488"/>
    </location>
</feature>
<feature type="cross-link" description="Glycyl lysine isopeptide (Lys-Gly) (interchain with G-Cter in SUMO2)" evidence="1">
    <location>
        <position position="786"/>
    </location>
</feature>
<feature type="sequence conflict" description="In Ref. 1; AAC36129." evidence="12" ref="1">
    <original>LY</original>
    <variation>FS</variation>
    <location>
        <begin position="388"/>
        <end position="389"/>
    </location>
</feature>
<feature type="sequence conflict" description="In Ref. 1; AAC36129." evidence="12" ref="1">
    <original>TLP</original>
    <variation>YTS</variation>
    <location>
        <begin position="391"/>
        <end position="393"/>
    </location>
</feature>
<feature type="sequence conflict" description="In Ref. 1; AAC36129." evidence="12" ref="1">
    <original>WL</original>
    <variation>CW</variation>
    <location>
        <begin position="757"/>
        <end position="758"/>
    </location>
</feature>
<feature type="sequence conflict" description="In Ref. 1; AAC36129." evidence="12" ref="1">
    <location>
        <begin position="759"/>
        <end position="795"/>
    </location>
</feature>
<name>DHX15_MOUSE</name>
<keyword id="KW-0007">Acetylation</keyword>
<keyword id="KW-0067">ATP-binding</keyword>
<keyword id="KW-0347">Helicase</keyword>
<keyword id="KW-0378">Hydrolase</keyword>
<keyword id="KW-0391">Immunity</keyword>
<keyword id="KW-0399">Innate immunity</keyword>
<keyword id="KW-1017">Isopeptide bond</keyword>
<keyword id="KW-0507">mRNA processing</keyword>
<keyword id="KW-0508">mRNA splicing</keyword>
<keyword id="KW-0547">Nucleotide-binding</keyword>
<keyword id="KW-0539">Nucleus</keyword>
<keyword id="KW-0597">Phosphoprotein</keyword>
<keyword id="KW-1185">Reference proteome</keyword>
<keyword id="KW-0694">RNA-binding</keyword>
<keyword id="KW-0832">Ubl conjugation</keyword>
<reference key="1">
    <citation type="journal article" date="1997" name="Proc. Natl. Acad. Sci. U.S.A.">
        <title>Cloning of mDEAH9, a putative RNA helicase and mammalian homologue of Saccharomyces cerevisiae splicing factor Prp43.</title>
        <authorList>
            <person name="Gee S."/>
            <person name="Krauss S.W."/>
            <person name="Miller E."/>
            <person name="Aoyagi K."/>
            <person name="Arenas J."/>
            <person name="Conboy J.G."/>
        </authorList>
    </citation>
    <scope>NUCLEOTIDE SEQUENCE [MRNA]</scope>
    <scope>SUBCELLULAR LOCATION</scope>
    <scope>TISSUE SPECIFICITY</scope>
</reference>
<reference key="2">
    <citation type="journal article" date="2004" name="Genome Res.">
        <title>The status, quality, and expansion of the NIH full-length cDNA project: the Mammalian Gene Collection (MGC).</title>
        <authorList>
            <consortium name="The MGC Project Team"/>
        </authorList>
    </citation>
    <scope>NUCLEOTIDE SEQUENCE [LARGE SCALE MRNA]</scope>
    <source>
        <tissue>Mammary gland</tissue>
    </source>
</reference>
<reference key="3">
    <citation type="journal article" date="2010" name="Cell">
        <title>A tissue-specific atlas of mouse protein phosphorylation and expression.</title>
        <authorList>
            <person name="Huttlin E.L."/>
            <person name="Jedrychowski M.P."/>
            <person name="Elias J.E."/>
            <person name="Goswami T."/>
            <person name="Rad R."/>
            <person name="Beausoleil S.A."/>
            <person name="Villen J."/>
            <person name="Haas W."/>
            <person name="Sowa M.E."/>
            <person name="Gygi S.P."/>
        </authorList>
    </citation>
    <scope>IDENTIFICATION BY MASS SPECTROMETRY [LARGE SCALE ANALYSIS]</scope>
    <source>
        <tissue>Brain</tissue>
        <tissue>Brown adipose tissue</tissue>
        <tissue>Heart</tissue>
        <tissue>Kidney</tissue>
        <tissue>Liver</tissue>
        <tissue>Lung</tissue>
        <tissue>Pancreas</tissue>
        <tissue>Spleen</tissue>
        <tissue>Testis</tissue>
    </source>
</reference>
<reference key="4">
    <citation type="journal article" date="2015" name="Science">
        <title>Nlrp6 regulates intestinal antiviral innate immunity.</title>
        <authorList>
            <person name="Wang P."/>
            <person name="Zhu S."/>
            <person name="Yang L."/>
            <person name="Cui S."/>
            <person name="Pan W."/>
            <person name="Jackson R."/>
            <person name="Zheng Y."/>
            <person name="Rongvaux A."/>
            <person name="Sun Q."/>
            <person name="Yang G."/>
            <person name="Gao S."/>
            <person name="Lin R."/>
            <person name="You F."/>
            <person name="Flavell R."/>
            <person name="Fikrig E."/>
        </authorList>
    </citation>
    <scope>FUNCTION</scope>
    <scope>INTERACTION WITH NLRP6</scope>
</reference>
<reference key="5">
    <citation type="journal article" date="2021" name="Cell">
        <title>Phase separation drives RNA virus-induced activation of the NLRP6 inflammasome.</title>
        <authorList>
            <person name="Shen C."/>
            <person name="Li R."/>
            <person name="Negro R."/>
            <person name="Cheng J."/>
            <person name="Vora S.M."/>
            <person name="Fu T.M."/>
            <person name="Wang A."/>
            <person name="He K."/>
            <person name="Andreeva L."/>
            <person name="Gao P."/>
            <person name="Tian Z."/>
            <person name="Flavell R.A."/>
            <person name="Zhu S."/>
            <person name="Wu H."/>
        </authorList>
    </citation>
    <scope>FUNCTION</scope>
</reference>
<reference key="6">
    <citation type="journal article" date="2021" name="Cell Rep.">
        <title>DHX15 is required to control RNA virus-induced intestinal inflammation.</title>
        <authorList>
            <person name="Xing J."/>
            <person name="Zhou X."/>
            <person name="Fang M."/>
            <person name="Zhang E."/>
            <person name="Minze L.J."/>
            <person name="Zhang Z."/>
        </authorList>
    </citation>
    <scope>FUNCTION</scope>
    <scope>DISRUPTION PHENOTYPE</scope>
</reference>
<reference key="7">
    <citation type="journal article" date="2021" name="Proc. Natl. Acad. Sci. U.S.A.">
        <title>The RNA helicase Dhx15 mediates Wnt-induced antimicrobial protein expression in Paneth cells.</title>
        <authorList>
            <person name="Wang Y."/>
            <person name="He K."/>
            <person name="Sheng B."/>
            <person name="Lei X."/>
            <person name="Tao W."/>
            <person name="Zhu X."/>
            <person name="Wei Z."/>
            <person name="Fu R."/>
            <person name="Wang A."/>
            <person name="Bai S."/>
            <person name="Zhang Z."/>
            <person name="Hong N."/>
            <person name="Ye C."/>
            <person name="Tian Y."/>
            <person name="Wang J."/>
            <person name="Li M."/>
            <person name="Zhang K."/>
            <person name="Li L."/>
            <person name="Yang H."/>
            <person name="Li H.B."/>
            <person name="Flavell R.A."/>
            <person name="Zhu S."/>
        </authorList>
    </citation>
    <scope>FUNCTION</scope>
    <scope>DISRUPTION PHENOTYPE</scope>
</reference>
<proteinExistence type="evidence at protein level"/>
<accession>O35286</accession>
<accession>Q99L91</accession>